<accession>A9KQC8</accession>
<reference key="1">
    <citation type="submission" date="2007-11" db="EMBL/GenBank/DDBJ databases">
        <title>Complete genome sequence of Clostridium phytofermentans ISDg.</title>
        <authorList>
            <person name="Leschine S.B."/>
            <person name="Warnick T.A."/>
            <person name="Blanchard J.L."/>
            <person name="Schnell D.J."/>
            <person name="Petit E.L."/>
            <person name="LaTouf W.G."/>
            <person name="Copeland A."/>
            <person name="Lucas S."/>
            <person name="Lapidus A."/>
            <person name="Barry K."/>
            <person name="Glavina del Rio T."/>
            <person name="Dalin E."/>
            <person name="Tice H."/>
            <person name="Pitluck S."/>
            <person name="Kiss H."/>
            <person name="Brettin T."/>
            <person name="Bruce D."/>
            <person name="Detter J.C."/>
            <person name="Han C."/>
            <person name="Kuske C."/>
            <person name="Schmutz J."/>
            <person name="Larimer F."/>
            <person name="Land M."/>
            <person name="Hauser L."/>
            <person name="Kyrpides N."/>
            <person name="Kim E.A."/>
            <person name="Richardson P."/>
        </authorList>
    </citation>
    <scope>NUCLEOTIDE SEQUENCE [LARGE SCALE GENOMIC DNA]</scope>
    <source>
        <strain>ATCC 700394 / DSM 18823 / ISDg</strain>
    </source>
</reference>
<organism>
    <name type="scientific">Lachnoclostridium phytofermentans (strain ATCC 700394 / DSM 18823 / ISDg)</name>
    <name type="common">Clostridium phytofermentans</name>
    <dbReference type="NCBI Taxonomy" id="357809"/>
    <lineage>
        <taxon>Bacteria</taxon>
        <taxon>Bacillati</taxon>
        <taxon>Bacillota</taxon>
        <taxon>Clostridia</taxon>
        <taxon>Lachnospirales</taxon>
        <taxon>Lachnospiraceae</taxon>
    </lineage>
</organism>
<dbReference type="EMBL" id="CP000885">
    <property type="protein sequence ID" value="ABX40437.1"/>
    <property type="molecule type" value="Genomic_DNA"/>
</dbReference>
<dbReference type="RefSeq" id="WP_012198080.1">
    <property type="nucleotide sequence ID" value="NC_010001.1"/>
</dbReference>
<dbReference type="SMR" id="A9KQC8"/>
<dbReference type="STRING" id="357809.Cphy_0047"/>
<dbReference type="KEGG" id="cpy:Cphy_0047"/>
<dbReference type="eggNOG" id="COG0718">
    <property type="taxonomic scope" value="Bacteria"/>
</dbReference>
<dbReference type="HOGENOM" id="CLU_140930_1_0_9"/>
<dbReference type="OrthoDB" id="9795263at2"/>
<dbReference type="Proteomes" id="UP000000370">
    <property type="component" value="Chromosome"/>
</dbReference>
<dbReference type="GO" id="GO:0043590">
    <property type="term" value="C:bacterial nucleoid"/>
    <property type="evidence" value="ECO:0007669"/>
    <property type="project" value="UniProtKB-UniRule"/>
</dbReference>
<dbReference type="GO" id="GO:0005829">
    <property type="term" value="C:cytosol"/>
    <property type="evidence" value="ECO:0007669"/>
    <property type="project" value="TreeGrafter"/>
</dbReference>
<dbReference type="GO" id="GO:0003677">
    <property type="term" value="F:DNA binding"/>
    <property type="evidence" value="ECO:0007669"/>
    <property type="project" value="UniProtKB-UniRule"/>
</dbReference>
<dbReference type="Gene3D" id="3.30.1310.10">
    <property type="entry name" value="Nucleoid-associated protein YbaB-like domain"/>
    <property type="match status" value="1"/>
</dbReference>
<dbReference type="HAMAP" id="MF_00274">
    <property type="entry name" value="DNA_YbaB_EbfC"/>
    <property type="match status" value="1"/>
</dbReference>
<dbReference type="InterPro" id="IPR036894">
    <property type="entry name" value="YbaB-like_sf"/>
</dbReference>
<dbReference type="InterPro" id="IPR004401">
    <property type="entry name" value="YbaB/EbfC"/>
</dbReference>
<dbReference type="NCBIfam" id="TIGR00103">
    <property type="entry name" value="DNA_YbaB_EbfC"/>
    <property type="match status" value="1"/>
</dbReference>
<dbReference type="PANTHER" id="PTHR33449">
    <property type="entry name" value="NUCLEOID-ASSOCIATED PROTEIN YBAB"/>
    <property type="match status" value="1"/>
</dbReference>
<dbReference type="PANTHER" id="PTHR33449:SF1">
    <property type="entry name" value="NUCLEOID-ASSOCIATED PROTEIN YBAB"/>
    <property type="match status" value="1"/>
</dbReference>
<dbReference type="Pfam" id="PF02575">
    <property type="entry name" value="YbaB_DNA_bd"/>
    <property type="match status" value="1"/>
</dbReference>
<dbReference type="PIRSF" id="PIRSF004555">
    <property type="entry name" value="UCP004555"/>
    <property type="match status" value="1"/>
</dbReference>
<dbReference type="SUPFAM" id="SSF82607">
    <property type="entry name" value="YbaB-like"/>
    <property type="match status" value="1"/>
</dbReference>
<sequence length="119" mass="12680">MAKRGGFPGGNMPGNMNNLMKQAQRMQKQMEDKTKEMEEKQWEATAGGGAVTVTVSGKKEVVSVKLSKEVVDPDDIEMLEDLIVAATNEALRKMEEESASAMNSIAGGLGNFGGLGGLF</sequence>
<gene>
    <name type="ordered locus">Cphy_0047</name>
</gene>
<feature type="chain" id="PRO_1000114605" description="Nucleoid-associated protein Cphy_0047">
    <location>
        <begin position="1"/>
        <end position="119"/>
    </location>
</feature>
<feature type="region of interest" description="Disordered" evidence="2">
    <location>
        <begin position="23"/>
        <end position="45"/>
    </location>
</feature>
<feature type="compositionally biased region" description="Basic and acidic residues" evidence="2">
    <location>
        <begin position="28"/>
        <end position="42"/>
    </location>
</feature>
<name>Y047_LACP7</name>
<protein>
    <recommendedName>
        <fullName evidence="1">Nucleoid-associated protein Cphy_0047</fullName>
    </recommendedName>
</protein>
<keyword id="KW-0963">Cytoplasm</keyword>
<keyword id="KW-0238">DNA-binding</keyword>
<keyword id="KW-1185">Reference proteome</keyword>
<comment type="function">
    <text evidence="1">Binds to DNA and alters its conformation. May be involved in regulation of gene expression, nucleoid organization and DNA protection.</text>
</comment>
<comment type="subunit">
    <text evidence="1">Homodimer.</text>
</comment>
<comment type="subcellular location">
    <subcellularLocation>
        <location evidence="1">Cytoplasm</location>
        <location evidence="1">Nucleoid</location>
    </subcellularLocation>
</comment>
<comment type="similarity">
    <text evidence="1">Belongs to the YbaB/EbfC family.</text>
</comment>
<proteinExistence type="inferred from homology"/>
<evidence type="ECO:0000255" key="1">
    <source>
        <dbReference type="HAMAP-Rule" id="MF_00274"/>
    </source>
</evidence>
<evidence type="ECO:0000256" key="2">
    <source>
        <dbReference type="SAM" id="MobiDB-lite"/>
    </source>
</evidence>